<reference key="1">
    <citation type="journal article" date="2004" name="J. Virol.">
        <title>Phylogenetic analysis of clinical herpes simplex virus type 1 isolates identified three genetic groups and recombinant viruses.</title>
        <authorList>
            <person name="Norberg P.R."/>
            <person name="Bergstroem T."/>
            <person name="Kekabdar E."/>
            <person name="Lindh M."/>
            <person name="Liljeqvist J.-A."/>
        </authorList>
    </citation>
    <scope>NUCLEOTIDE SEQUENCE [GENOMIC DNA]</scope>
</reference>
<reference key="2">
    <citation type="journal article" date="1993" name="J. Virol.">
        <title>Identification of a new transcriptional unit that yields a gene product within the unique sequences of the short component of the herpes simplex virus 1 genome.</title>
        <authorList>
            <person name="Georgopoulou U."/>
            <person name="Michaelidou A."/>
            <person name="Roizman B."/>
            <person name="Mavromara-Nazos P."/>
        </authorList>
    </citation>
    <scope>NUCLEOTIDE SEQUENCE [GENOMIC DNA] OF 440-552</scope>
</reference>
<reference key="3">
    <citation type="journal article" date="1988" name="J. Virol.">
        <title>Herpes simplex virus immunoglobulin G Fc receptor activity depends on a complex of two viral glycoproteins, gE and gI.</title>
        <authorList>
            <person name="Johnson D.C."/>
            <person name="Frame M.C."/>
            <person name="Ligas M.W."/>
            <person name="Cross A.M."/>
            <person name="Stow N.D."/>
        </authorList>
    </citation>
    <scope>FUNCTION</scope>
    <scope>INTERACTION WITH GLYCOPROTEIN I</scope>
</reference>
<reference key="4">
    <citation type="journal article" date="2001" name="J. Virol.">
        <title>Herpes simplex virus gE/gI sorts nascent virions to epithelial cell junctions, promoting virus spread.</title>
        <authorList>
            <person name="Johnson D.C."/>
            <person name="Webb M."/>
            <person name="Wisner T.W."/>
            <person name="Brunetti C."/>
        </authorList>
    </citation>
    <scope>FUNCTION</scope>
    <scope>SUBCELLULAR LOCATION</scope>
</reference>
<reference key="5">
    <citation type="journal article" date="2006" name="J. Virol.">
        <title>Herpes simplex virus gE/gI must accumulate in the trans-Golgi network at early times and then redistribute to cell junctions to promote cell-cell spread.</title>
        <authorList>
            <person name="Farnsworth A."/>
            <person name="Johnson D.C."/>
        </authorList>
    </citation>
    <scope>FUNCTION</scope>
    <scope>SUBCELLULAR LOCATION</scope>
</reference>
<reference key="6">
    <citation type="journal article" date="2008" name="J. Virol.">
        <title>Herpes simplex virus gE/gI and US9 proteins promote transport of both capsids and virion glycoproteins in neuronal axons.</title>
        <authorList>
            <person name="Snyder A."/>
            <person name="Polcicova K."/>
            <person name="Johnson D.C."/>
        </authorList>
    </citation>
    <scope>FUNCTION</scope>
</reference>
<reference key="7">
    <citation type="journal article" date="2008" name="J. Virol.">
        <title>Comprehensive characterization of extracellular herpes simplex virus type 1 virions.</title>
        <authorList>
            <person name="Loret S."/>
            <person name="Guay G."/>
            <person name="Lippe R."/>
        </authorList>
    </citation>
    <scope>SUBCELLULAR LOCATION</scope>
</reference>
<protein>
    <recommendedName>
        <fullName>Envelope glycoprotein E</fullName>
        <shortName>gE</shortName>
    </recommendedName>
    <alternativeName>
        <fullName>gE-1</fullName>
    </alternativeName>
</protein>
<gene>
    <name type="primary">gE</name>
    <name type="ORF">US8</name>
</gene>
<feature type="signal peptide" evidence="2">
    <location>
        <begin position="1"/>
        <end position="20"/>
    </location>
</feature>
<feature type="chain" id="PRO_0000038226" description="Envelope glycoprotein E">
    <location>
        <begin position="21"/>
        <end position="552"/>
    </location>
</feature>
<feature type="topological domain" description="Virion surface" evidence="2">
    <location>
        <begin position="21"/>
        <end position="421"/>
    </location>
</feature>
<feature type="transmembrane region" description="Helical" evidence="2">
    <location>
        <begin position="422"/>
        <end position="442"/>
    </location>
</feature>
<feature type="topological domain" description="Intravirion" evidence="2">
    <location>
        <begin position="443"/>
        <end position="552"/>
    </location>
</feature>
<feature type="region of interest" description="Interaction with gI" evidence="1">
    <location>
        <begin position="63"/>
        <end position="88"/>
    </location>
</feature>
<feature type="region of interest" description="Disordered" evidence="3">
    <location>
        <begin position="162"/>
        <end position="216"/>
    </location>
</feature>
<feature type="region of interest" description="Fc-binding" evidence="1">
    <location>
        <begin position="237"/>
        <end position="382"/>
    </location>
</feature>
<feature type="region of interest" description="Disordered" evidence="3">
    <location>
        <begin position="396"/>
        <end position="415"/>
    </location>
</feature>
<feature type="region of interest" description="Interaction with VP22 and UL11" evidence="1">
    <location>
        <begin position="472"/>
        <end position="497"/>
    </location>
</feature>
<feature type="region of interest" description="Disordered" evidence="3">
    <location>
        <begin position="478"/>
        <end position="552"/>
    </location>
</feature>
<feature type="region of interest" description="Acidic" evidence="1">
    <location>
        <begin position="478"/>
        <end position="486"/>
    </location>
</feature>
<feature type="short sequence motif" description="Internalization motif" evidence="2">
    <location>
        <begin position="465"/>
        <end position="468"/>
    </location>
</feature>
<feature type="short sequence motif" description="Internalization motif" evidence="2">
    <location>
        <begin position="474"/>
        <end position="477"/>
    </location>
</feature>
<feature type="compositionally biased region" description="Pro residues" evidence="3">
    <location>
        <begin position="164"/>
        <end position="173"/>
    </location>
</feature>
<feature type="compositionally biased region" description="Acidic residues" evidence="3">
    <location>
        <begin position="175"/>
        <end position="190"/>
    </location>
</feature>
<feature type="compositionally biased region" description="Pro residues" evidence="3">
    <location>
        <begin position="201"/>
        <end position="211"/>
    </location>
</feature>
<feature type="compositionally biased region" description="Low complexity" evidence="3">
    <location>
        <begin position="405"/>
        <end position="415"/>
    </location>
</feature>
<feature type="compositionally biased region" description="Polar residues" evidence="3">
    <location>
        <begin position="543"/>
        <end position="552"/>
    </location>
</feature>
<feature type="modified residue" description="Sulfotyrosine; by host" evidence="2">
    <location>
        <position position="176"/>
    </location>
</feature>
<feature type="modified residue" description="Phosphoserine; by host CK2" evidence="1">
    <location>
        <position position="478"/>
    </location>
</feature>
<feature type="modified residue" description="Phosphoserine; by host CK2" evidence="1">
    <location>
        <position position="479"/>
    </location>
</feature>
<feature type="modified residue" description="Phosphoserine" evidence="1">
    <location>
        <position position="505"/>
    </location>
</feature>
<feature type="glycosylation site" description="N-linked (GlcNAc...) asparagine; by host" evidence="2">
    <location>
        <position position="124"/>
    </location>
</feature>
<feature type="glycosylation site" description="N-linked (GlcNAc...) asparagine; by host" evidence="2">
    <location>
        <position position="245"/>
    </location>
</feature>
<feature type="disulfide bond" evidence="1">
    <location>
        <begin position="273"/>
        <end position="299"/>
    </location>
</feature>
<feature type="disulfide bond" evidence="1">
    <location>
        <begin position="282"/>
        <end position="291"/>
    </location>
</feature>
<feature type="disulfide bond" evidence="1">
    <location>
        <begin position="316"/>
        <end position="325"/>
    </location>
</feature>
<comment type="function">
    <text evidence="4 5 7 8">In epithelial cells, the heterodimer gE/gI is required for the cell-to-cell spread of the virus, by sorting nascent virions to cell junctions. Once the virus reaches the cell junctions, virus particles can spread to adjacent cells extremely rapidly through interactions with cellular receptors that accumulate at these junctions. Implicated in basolateral spread in polarized cells. In neuronal cells, gE/gI is essential for the anterograde spread of the infection throughout the host nervous system. Together with US9, the heterodimer gE/gI is involved in the sorting and transport of viral structural components toward axon tips.</text>
</comment>
<comment type="function">
    <text evidence="1">The heterodimer gE/gI serves as a receptor for the Fc part of host IgG. Dissociation of gE/gI from IgG occurs at acidic pH. May thus be involved in anti-HSV antibodies bipolar bridging, followed by intracellular endocytosis and degradation, thereby interfering with host IgG-mediated immune responses (By similarity).</text>
</comment>
<comment type="subunit">
    <text evidence="1">Interacts with gI; this interaction enhances the Fc receptor function of gE. The heterodimer gE/gI interacts with the Fc part of host IgG. Interacts (via C-terminus) with VP22 tegument protein; this interaction is necessary for the recruitment of VP22 to the Golgi and its packaging into virions. Interacts (via C-terminus) with UL11 tegument protein (By similarity).</text>
</comment>
<comment type="subcellular location">
    <subcellularLocation>
        <location evidence="6">Virion membrane</location>
        <topology evidence="2">Single-pass type I membrane protein</topology>
    </subcellularLocation>
    <subcellularLocation>
        <location evidence="5">Host cell membrane</location>
        <topology evidence="2">Single-pass type I membrane protein</topology>
    </subcellularLocation>
    <subcellularLocation>
        <location evidence="4 5">Host cell junction</location>
    </subcellularLocation>
    <subcellularLocation>
        <location evidence="5">Host Golgi apparatus</location>
        <location evidence="5">Host trans-Golgi network</location>
    </subcellularLocation>
    <text evidence="4">During virion morphogenesis, this protein probably accumulates in host trans-Golgi where secondary envelopment occurs. The heterodimer gE/gI then redistributes to cell junctions to promote cell-cell spread later in the infection.</text>
</comment>
<comment type="PTM">
    <text evidence="9">Phosphorylated on serines within the acidic cluster. Phosphorylation determines whether endocytosed viral gE traffics to the trans-Golgi network or recycles to the cell membrane.</text>
</comment>
<comment type="PTM">
    <text evidence="1">N-glycosylated, and sulfated.</text>
</comment>
<comment type="similarity">
    <text evidence="9">Belongs to the alphaherpesvirinae glycoprotein E family.</text>
</comment>
<name>GE_HHV1F</name>
<proteinExistence type="evidence at protein level"/>
<accession>Q703F0</accession>
<accession>Q86624</accession>
<organism>
    <name type="scientific">Human herpesvirus 1 (strain F)</name>
    <name type="common">HHV-1</name>
    <name type="synonym">Human herpes simplex virus 1</name>
    <dbReference type="NCBI Taxonomy" id="10304"/>
    <lineage>
        <taxon>Viruses</taxon>
        <taxon>Duplodnaviria</taxon>
        <taxon>Heunggongvirae</taxon>
        <taxon>Peploviricota</taxon>
        <taxon>Herviviricetes</taxon>
        <taxon>Herpesvirales</taxon>
        <taxon>Orthoherpesviridae</taxon>
        <taxon>Alphaherpesvirinae</taxon>
        <taxon>Simplexvirus</taxon>
        <taxon>Simplexvirus humanalpha1</taxon>
        <taxon>Human herpesvirus 1</taxon>
    </lineage>
</organism>
<dbReference type="EMBL" id="AJ626469">
    <property type="protein sequence ID" value="CAF24756.1"/>
    <property type="molecule type" value="Genomic_DNA"/>
</dbReference>
<dbReference type="EMBL" id="S62895">
    <property type="protein sequence ID" value="AAB27080.1"/>
    <property type="molecule type" value="Genomic_DNA"/>
</dbReference>
<dbReference type="GlyCosmos" id="Q703F0">
    <property type="glycosylation" value="2 sites, No reported glycans"/>
</dbReference>
<dbReference type="GO" id="GO:0044177">
    <property type="term" value="C:host cell Golgi apparatus"/>
    <property type="evidence" value="ECO:0007669"/>
    <property type="project" value="UniProtKB-SubCell"/>
</dbReference>
<dbReference type="GO" id="GO:0044156">
    <property type="term" value="C:host cell junction"/>
    <property type="evidence" value="ECO:0007669"/>
    <property type="project" value="UniProtKB-SubCell"/>
</dbReference>
<dbReference type="GO" id="GO:0016020">
    <property type="term" value="C:membrane"/>
    <property type="evidence" value="ECO:0007669"/>
    <property type="project" value="UniProtKB-KW"/>
</dbReference>
<dbReference type="GO" id="GO:0019031">
    <property type="term" value="C:viral envelope"/>
    <property type="evidence" value="ECO:0007669"/>
    <property type="project" value="UniProtKB-KW"/>
</dbReference>
<dbReference type="GO" id="GO:0055036">
    <property type="term" value="C:virion membrane"/>
    <property type="evidence" value="ECO:0007669"/>
    <property type="project" value="UniProtKB-SubCell"/>
</dbReference>
<dbReference type="GO" id="GO:0044067">
    <property type="term" value="P:symbiont-mediated perturbation of host cell-cell junction"/>
    <property type="evidence" value="ECO:0000269"/>
    <property type="project" value="SigSci"/>
</dbReference>
<dbReference type="Gene3D" id="2.60.40.10">
    <property type="entry name" value="Immunoglobulins"/>
    <property type="match status" value="1"/>
</dbReference>
<dbReference type="InterPro" id="IPR046463">
    <property type="entry name" value="Herpes_gE_N"/>
</dbReference>
<dbReference type="InterPro" id="IPR003404">
    <property type="entry name" value="Herpes_glycopE_Fc"/>
</dbReference>
<dbReference type="InterPro" id="IPR036179">
    <property type="entry name" value="Ig-like_dom_sf"/>
</dbReference>
<dbReference type="InterPro" id="IPR013783">
    <property type="entry name" value="Ig-like_fold"/>
</dbReference>
<dbReference type="Pfam" id="PF02480">
    <property type="entry name" value="Herpes_gE"/>
    <property type="match status" value="1"/>
</dbReference>
<dbReference type="Pfam" id="PF20418">
    <property type="entry name" value="Herpes_gE_N"/>
    <property type="match status" value="1"/>
</dbReference>
<dbReference type="SUPFAM" id="SSF48726">
    <property type="entry name" value="Immunoglobulin"/>
    <property type="match status" value="1"/>
</dbReference>
<keyword id="KW-1015">Disulfide bond</keyword>
<keyword id="KW-0325">Glycoprotein</keyword>
<keyword id="KW-1031">Host cell junction</keyword>
<keyword id="KW-1032">Host cell membrane</keyword>
<keyword id="KW-1040">Host Golgi apparatus</keyword>
<keyword id="KW-1043">Host membrane</keyword>
<keyword id="KW-0945">Host-virus interaction</keyword>
<keyword id="KW-0472">Membrane</keyword>
<keyword id="KW-0597">Phosphoprotein</keyword>
<keyword id="KW-0732">Signal</keyword>
<keyword id="KW-0765">Sulfation</keyword>
<keyword id="KW-0812">Transmembrane</keyword>
<keyword id="KW-1133">Transmembrane helix</keyword>
<keyword id="KW-0261">Viral envelope protein</keyword>
<keyword id="KW-0899">Viral immunoevasion</keyword>
<keyword id="KW-0946">Virion</keyword>
<organismHost>
    <name type="scientific">Homo sapiens</name>
    <name type="common">Human</name>
    <dbReference type="NCBI Taxonomy" id="9606"/>
</organismHost>
<evidence type="ECO:0000250" key="1"/>
<evidence type="ECO:0000255" key="2"/>
<evidence type="ECO:0000256" key="3">
    <source>
        <dbReference type="SAM" id="MobiDB-lite"/>
    </source>
</evidence>
<evidence type="ECO:0000269" key="4">
    <source>
    </source>
</evidence>
<evidence type="ECO:0000269" key="5">
    <source>
    </source>
</evidence>
<evidence type="ECO:0000269" key="6">
    <source>
    </source>
</evidence>
<evidence type="ECO:0000269" key="7">
    <source>
    </source>
</evidence>
<evidence type="ECO:0000269" key="8">
    <source>
    </source>
</evidence>
<evidence type="ECO:0000305" key="9"/>
<sequence>MDRGAVVGFLLGVCVVSCLAGTPKTSWRRVSVGEDVSLLPAPGPTGRGPTQKLLWAVEPLDGCGPLHPSWXSLMPPKQVPETVVDAACMRAPVPLAMAYAPPAPSATGGLRTDFVWQERAAVVNRSLVIYGVRETDSGLYTLSVGDIKDPARQVASVVLVVQPAPVPTPPPTPADYDEDDNDEGEGEDESLAGTPASGTPRLPPPPAPPRSWPSAPEVSHVRGVTVRMETPEAILFSPGEAFSTNVSIHAIAHDDQTYTMDVVWLRFDVPTSCAEMRIYESCLYHPQLPECLSPADAPCAASTWTSRLAVRSYAGCSRTNPPPRCSAEAHMEPVPGLAWQAASVNLEFRDASPQHSGLYLCVVYVNDHIHAWGHITISTAAXYRNAVVEQPLPQRGADLAEPTHPHVGAPPHAPPTHGALRLGAVMGAALLLSVLGLSVWACMTCWRRRAWRAVKSRASGKGPTYIRVADSELYADWSSDSEGERDQVPWLAPPERPDSPSTNGSGFEILSPTAPSVYPRSDGHQSRRQLTTFGSGRPDRRYSQASDSSVFW</sequence>